<accession>P92132</accession>
<accession>Q9GP24</accession>
<evidence type="ECO:0000250" key="1"/>
<evidence type="ECO:0000255" key="2"/>
<evidence type="ECO:0000255" key="3">
    <source>
        <dbReference type="PROSITE-ProRule" id="PRU10088"/>
    </source>
</evidence>
<evidence type="ECO:0000255" key="4">
    <source>
        <dbReference type="PROSITE-ProRule" id="PRU10089"/>
    </source>
</evidence>
<evidence type="ECO:0000255" key="5">
    <source>
        <dbReference type="PROSITE-ProRule" id="PRU10090"/>
    </source>
</evidence>
<evidence type="ECO:0000269" key="6">
    <source>
    </source>
</evidence>
<name>CATB2_GIAIN</name>
<sequence>MKLFLLAAAAFSAPALTVSELNHIKSLNPRWKAGIPKRFEGLTKDEISSLLMPVSFLKNAKGAAPRGTFTDKDDVPESFDFREEYPHCIPEVVDQGGCGSCWAFSSVATFGDRRCVAGLDKKPVKYSPQYVVSCDHGDMACNGGWLPNVWKFLTKTGTTTDECVPYKSGSTTLRGTCPTKCADGSSKVHLATATSYKDYGLDIPAMMKALSTSGPLQVAFLVHSDFMYYESGVYQHTYGYMEGGHAVEMVGYGTDDDGVDYWIIKNSWGPDWGEDGYFRMIRGINDCSIEEQAYAGFFDE</sequence>
<keyword id="KW-0903">Direct protein sequencing</keyword>
<keyword id="KW-1015">Disulfide bond</keyword>
<keyword id="KW-0378">Hydrolase</keyword>
<keyword id="KW-0645">Protease</keyword>
<keyword id="KW-0732">Signal</keyword>
<keyword id="KW-0788">Thiol protease</keyword>
<keyword id="KW-0926">Vacuole</keyword>
<keyword id="KW-0865">Zymogen</keyword>
<protein>
    <recommendedName>
        <fullName>Cathepsin B-like CP2</fullName>
        <ecNumber>3.4.22.-</ecNumber>
    </recommendedName>
    <alternativeName>
        <fullName>Cathepsin B-like protease B2</fullName>
    </alternativeName>
</protein>
<comment type="function">
    <text evidence="6">Thiol protease which is required for parasite excystation and invasion of the proximal small intestine of the human host.</text>
</comment>
<comment type="subcellular location">
    <subcellularLocation>
        <location evidence="6">Vacuole</location>
    </subcellularLocation>
</comment>
<comment type="developmental stage">
    <text evidence="6">To initiate infection, trophozoites emerge from a cyst in the host. Excystation is blocked by specific cysteine protease inhibitors. Vacuoles release it just prior to excystation. Expressed in replicating and encysting trophozoites without supplemental iron.</text>
</comment>
<comment type="similarity">
    <text evidence="3 4 5">Belongs to the peptidase C1 family.</text>
</comment>
<proteinExistence type="evidence at protein level"/>
<gene>
    <name type="primary">CP2</name>
</gene>
<reference key="1">
    <citation type="journal article" date="2002" name="Mol. Biochem. Parasitol.">
        <title>Cysteine proteases of parasitic organisms.</title>
        <authorList>
            <person name="Sajid M."/>
            <person name="McKerrow J.H."/>
        </authorList>
    </citation>
    <scope>NUCLEOTIDE SEQUENCE [GENOMIC DNA]</scope>
    <source>
        <strain>ATCC 30957 / WB</strain>
    </source>
</reference>
<reference key="2">
    <citation type="journal article" date="1997" name="Cell">
        <title>A primitive enzyme for a primitive cell: the protease required for excystation of Giardia.</title>
        <authorList>
            <person name="Ward W."/>
            <person name="Alvarado L."/>
            <person name="Rawlings N.D."/>
            <person name="Engel J.C."/>
            <person name="Franklin C."/>
            <person name="McKerrow J.H."/>
        </authorList>
    </citation>
    <scope>NUCLEOTIDE SEQUENCE [GENOMIC DNA] OF 71-268</scope>
    <scope>PROTEIN SEQUENCE OF 71-84</scope>
    <scope>FUNCTION</scope>
    <scope>SUBCELLULAR LOCATION</scope>
    <scope>DEVELOPMENTAL STAGE</scope>
    <source>
        <strain>ATCC 30957 / WB</strain>
    </source>
</reference>
<organism>
    <name type="scientific">Giardia intestinalis</name>
    <name type="common">Giardia lamblia</name>
    <dbReference type="NCBI Taxonomy" id="5741"/>
    <lineage>
        <taxon>Eukaryota</taxon>
        <taxon>Metamonada</taxon>
        <taxon>Diplomonadida</taxon>
        <taxon>Hexamitidae</taxon>
        <taxon>Giardiinae</taxon>
        <taxon>Giardia</taxon>
    </lineage>
</organism>
<dbReference type="EC" id="3.4.22.-"/>
<dbReference type="EMBL" id="AJ302012">
    <property type="protein sequence ID" value="CAC18647.1"/>
    <property type="molecule type" value="Genomic_DNA"/>
</dbReference>
<dbReference type="EMBL" id="U83276">
    <property type="protein sequence ID" value="AAB58259.1"/>
    <property type="molecule type" value="Genomic_DNA"/>
</dbReference>
<dbReference type="SMR" id="P92132"/>
<dbReference type="MEROPS" id="C01.094"/>
<dbReference type="VEuPathDB" id="GiardiaDB:DHA2_14019"/>
<dbReference type="VEuPathDB" id="GiardiaDB:GL50581_78"/>
<dbReference type="VEuPathDB" id="GiardiaDB:GL50803_0014019"/>
<dbReference type="VEuPathDB" id="GiardiaDB:QR46_3020"/>
<dbReference type="eggNOG" id="KOG1543">
    <property type="taxonomic scope" value="Eukaryota"/>
</dbReference>
<dbReference type="GO" id="GO:0005773">
    <property type="term" value="C:vacuole"/>
    <property type="evidence" value="ECO:0007669"/>
    <property type="project" value="UniProtKB-SubCell"/>
</dbReference>
<dbReference type="GO" id="GO:0008234">
    <property type="term" value="F:cysteine-type peptidase activity"/>
    <property type="evidence" value="ECO:0007669"/>
    <property type="project" value="UniProtKB-KW"/>
</dbReference>
<dbReference type="GO" id="GO:0006508">
    <property type="term" value="P:proteolysis"/>
    <property type="evidence" value="ECO:0007669"/>
    <property type="project" value="UniProtKB-KW"/>
</dbReference>
<dbReference type="CDD" id="cd02620">
    <property type="entry name" value="Peptidase_C1A_CathepsinB"/>
    <property type="match status" value="1"/>
</dbReference>
<dbReference type="FunFam" id="3.90.70.10:FF:000096">
    <property type="entry name" value="Cathepsin B-like cysteine protease"/>
    <property type="match status" value="1"/>
</dbReference>
<dbReference type="Gene3D" id="3.90.70.10">
    <property type="entry name" value="Cysteine proteinases"/>
    <property type="match status" value="1"/>
</dbReference>
<dbReference type="InterPro" id="IPR038765">
    <property type="entry name" value="Papain-like_cys_pep_sf"/>
</dbReference>
<dbReference type="InterPro" id="IPR025661">
    <property type="entry name" value="Pept_asp_AS"/>
</dbReference>
<dbReference type="InterPro" id="IPR000169">
    <property type="entry name" value="Pept_cys_AS"/>
</dbReference>
<dbReference type="InterPro" id="IPR025660">
    <property type="entry name" value="Pept_his_AS"/>
</dbReference>
<dbReference type="InterPro" id="IPR013128">
    <property type="entry name" value="Peptidase_C1A"/>
</dbReference>
<dbReference type="InterPro" id="IPR000668">
    <property type="entry name" value="Peptidase_C1A_C"/>
</dbReference>
<dbReference type="PANTHER" id="PTHR12411">
    <property type="entry name" value="CYSTEINE PROTEASE FAMILY C1-RELATED"/>
    <property type="match status" value="1"/>
</dbReference>
<dbReference type="Pfam" id="PF00112">
    <property type="entry name" value="Peptidase_C1"/>
    <property type="match status" value="1"/>
</dbReference>
<dbReference type="PRINTS" id="PR00705">
    <property type="entry name" value="PAPAIN"/>
</dbReference>
<dbReference type="SMART" id="SM00645">
    <property type="entry name" value="Pept_C1"/>
    <property type="match status" value="1"/>
</dbReference>
<dbReference type="SUPFAM" id="SSF54001">
    <property type="entry name" value="Cysteine proteinases"/>
    <property type="match status" value="1"/>
</dbReference>
<dbReference type="PROSITE" id="PS00640">
    <property type="entry name" value="THIOL_PROTEASE_ASN"/>
    <property type="match status" value="1"/>
</dbReference>
<dbReference type="PROSITE" id="PS00139">
    <property type="entry name" value="THIOL_PROTEASE_CYS"/>
    <property type="match status" value="1"/>
</dbReference>
<dbReference type="PROSITE" id="PS00639">
    <property type="entry name" value="THIOL_PROTEASE_HIS"/>
    <property type="match status" value="1"/>
</dbReference>
<feature type="signal peptide" evidence="2">
    <location>
        <begin position="1"/>
        <end position="19"/>
    </location>
</feature>
<feature type="propeptide" id="PRO_0000026166" description="Activation peptide" evidence="1">
    <location>
        <begin position="20"/>
        <end status="unknown"/>
    </location>
</feature>
<feature type="chain" id="PRO_0000026167" description="Cathepsin B-like CP2">
    <location>
        <begin status="unknown"/>
        <end position="300"/>
    </location>
</feature>
<feature type="active site" evidence="1">
    <location>
        <position position="101"/>
    </location>
</feature>
<feature type="active site" evidence="1">
    <location>
        <position position="245"/>
    </location>
</feature>
<feature type="active site" evidence="1">
    <location>
        <position position="266"/>
    </location>
</feature>
<feature type="disulfide bond" evidence="1">
    <location>
        <begin position="88"/>
        <end position="115"/>
    </location>
</feature>
<feature type="disulfide bond" evidence="1">
    <location>
        <begin position="98"/>
        <end position="141"/>
    </location>
</feature>
<feature type="disulfide bond" evidence="1">
    <location>
        <begin position="134"/>
        <end position="177"/>
    </location>
</feature>